<organism>
    <name type="scientific">Escherichia coli O139:H28 (strain E24377A / ETEC)</name>
    <dbReference type="NCBI Taxonomy" id="331111"/>
    <lineage>
        <taxon>Bacteria</taxon>
        <taxon>Pseudomonadati</taxon>
        <taxon>Pseudomonadota</taxon>
        <taxon>Gammaproteobacteria</taxon>
        <taxon>Enterobacterales</taxon>
        <taxon>Enterobacteriaceae</taxon>
        <taxon>Escherichia</taxon>
    </lineage>
</organism>
<gene>
    <name evidence="1" type="primary">rplS</name>
    <name type="ordered locus">EcE24377A_2890</name>
</gene>
<protein>
    <recommendedName>
        <fullName evidence="1">Large ribosomal subunit protein bL19</fullName>
    </recommendedName>
    <alternativeName>
        <fullName evidence="2">50S ribosomal protein L19</fullName>
    </alternativeName>
</protein>
<sequence>MSNIIKQLEQEQMKQDVPSFRPGDTVEVKVWVVEGSKKRLQAFEGVVIAIRNRGLHSAFTVRKISNGEGVERVFQTHSPVVDSISVKRRGAVRKAKLYYLRERTGKAARIKERLN</sequence>
<comment type="function">
    <text evidence="1">This protein is located at the 30S-50S ribosomal subunit interface and may play a role in the structure and function of the aminoacyl-tRNA binding site.</text>
</comment>
<comment type="similarity">
    <text evidence="1">Belongs to the bacterial ribosomal protein bL19 family.</text>
</comment>
<name>RL19_ECO24</name>
<evidence type="ECO:0000255" key="1">
    <source>
        <dbReference type="HAMAP-Rule" id="MF_00402"/>
    </source>
</evidence>
<evidence type="ECO:0000305" key="2"/>
<keyword id="KW-1185">Reference proteome</keyword>
<keyword id="KW-0687">Ribonucleoprotein</keyword>
<keyword id="KW-0689">Ribosomal protein</keyword>
<accession>A7ZQ46</accession>
<dbReference type="EMBL" id="CP000800">
    <property type="protein sequence ID" value="ABV17882.1"/>
    <property type="molecule type" value="Genomic_DNA"/>
</dbReference>
<dbReference type="RefSeq" id="WP_000065253.1">
    <property type="nucleotide sequence ID" value="NC_009801.1"/>
</dbReference>
<dbReference type="SMR" id="A7ZQ46"/>
<dbReference type="GeneID" id="93774456"/>
<dbReference type="KEGG" id="ecw:EcE24377A_2890"/>
<dbReference type="HOGENOM" id="CLU_103507_2_1_6"/>
<dbReference type="Proteomes" id="UP000001122">
    <property type="component" value="Chromosome"/>
</dbReference>
<dbReference type="GO" id="GO:0022625">
    <property type="term" value="C:cytosolic large ribosomal subunit"/>
    <property type="evidence" value="ECO:0007669"/>
    <property type="project" value="TreeGrafter"/>
</dbReference>
<dbReference type="GO" id="GO:0003735">
    <property type="term" value="F:structural constituent of ribosome"/>
    <property type="evidence" value="ECO:0007669"/>
    <property type="project" value="InterPro"/>
</dbReference>
<dbReference type="GO" id="GO:0006412">
    <property type="term" value="P:translation"/>
    <property type="evidence" value="ECO:0007669"/>
    <property type="project" value="UniProtKB-UniRule"/>
</dbReference>
<dbReference type="FunFam" id="2.30.30.790:FF:000001">
    <property type="entry name" value="50S ribosomal protein L19"/>
    <property type="match status" value="1"/>
</dbReference>
<dbReference type="Gene3D" id="2.30.30.790">
    <property type="match status" value="1"/>
</dbReference>
<dbReference type="HAMAP" id="MF_00402">
    <property type="entry name" value="Ribosomal_bL19"/>
    <property type="match status" value="1"/>
</dbReference>
<dbReference type="InterPro" id="IPR001857">
    <property type="entry name" value="Ribosomal_bL19"/>
</dbReference>
<dbReference type="InterPro" id="IPR018257">
    <property type="entry name" value="Ribosomal_bL19_CS"/>
</dbReference>
<dbReference type="InterPro" id="IPR038657">
    <property type="entry name" value="Ribosomal_bL19_sf"/>
</dbReference>
<dbReference type="InterPro" id="IPR008991">
    <property type="entry name" value="Translation_prot_SH3-like_sf"/>
</dbReference>
<dbReference type="NCBIfam" id="TIGR01024">
    <property type="entry name" value="rplS_bact"/>
    <property type="match status" value="1"/>
</dbReference>
<dbReference type="PANTHER" id="PTHR15680:SF9">
    <property type="entry name" value="LARGE RIBOSOMAL SUBUNIT PROTEIN BL19M"/>
    <property type="match status" value="1"/>
</dbReference>
<dbReference type="PANTHER" id="PTHR15680">
    <property type="entry name" value="RIBOSOMAL PROTEIN L19"/>
    <property type="match status" value="1"/>
</dbReference>
<dbReference type="Pfam" id="PF01245">
    <property type="entry name" value="Ribosomal_L19"/>
    <property type="match status" value="1"/>
</dbReference>
<dbReference type="PIRSF" id="PIRSF002191">
    <property type="entry name" value="Ribosomal_L19"/>
    <property type="match status" value="1"/>
</dbReference>
<dbReference type="PRINTS" id="PR00061">
    <property type="entry name" value="RIBOSOMALL19"/>
</dbReference>
<dbReference type="SUPFAM" id="SSF50104">
    <property type="entry name" value="Translation proteins SH3-like domain"/>
    <property type="match status" value="1"/>
</dbReference>
<dbReference type="PROSITE" id="PS01015">
    <property type="entry name" value="RIBOSOMAL_L19"/>
    <property type="match status" value="1"/>
</dbReference>
<proteinExistence type="inferred from homology"/>
<feature type="chain" id="PRO_1000060801" description="Large ribosomal subunit protein bL19">
    <location>
        <begin position="1"/>
        <end position="115"/>
    </location>
</feature>
<reference key="1">
    <citation type="journal article" date="2008" name="J. Bacteriol.">
        <title>The pangenome structure of Escherichia coli: comparative genomic analysis of E. coli commensal and pathogenic isolates.</title>
        <authorList>
            <person name="Rasko D.A."/>
            <person name="Rosovitz M.J."/>
            <person name="Myers G.S.A."/>
            <person name="Mongodin E.F."/>
            <person name="Fricke W.F."/>
            <person name="Gajer P."/>
            <person name="Crabtree J."/>
            <person name="Sebaihia M."/>
            <person name="Thomson N.R."/>
            <person name="Chaudhuri R."/>
            <person name="Henderson I.R."/>
            <person name="Sperandio V."/>
            <person name="Ravel J."/>
        </authorList>
    </citation>
    <scope>NUCLEOTIDE SEQUENCE [LARGE SCALE GENOMIC DNA]</scope>
    <source>
        <strain>E24377A / ETEC</strain>
    </source>
</reference>